<name>LPXC_CAMFF</name>
<gene>
    <name evidence="1" type="primary">lpxC</name>
    <name type="ordered locus">CFF8240_1497</name>
</gene>
<feature type="chain" id="PRO_1000013200" description="UDP-3-O-acyl-N-acetylglucosamine deacetylase">
    <location>
        <begin position="1"/>
        <end position="294"/>
    </location>
</feature>
<feature type="active site" description="Proton donor" evidence="1">
    <location>
        <position position="259"/>
    </location>
</feature>
<feature type="binding site" evidence="1">
    <location>
        <position position="75"/>
    </location>
    <ligand>
        <name>Zn(2+)</name>
        <dbReference type="ChEBI" id="CHEBI:29105"/>
    </ligand>
</feature>
<feature type="binding site" evidence="1">
    <location>
        <position position="232"/>
    </location>
    <ligand>
        <name>Zn(2+)</name>
        <dbReference type="ChEBI" id="CHEBI:29105"/>
    </ligand>
</feature>
<feature type="binding site" evidence="1">
    <location>
        <position position="236"/>
    </location>
    <ligand>
        <name>Zn(2+)</name>
        <dbReference type="ChEBI" id="CHEBI:29105"/>
    </ligand>
</feature>
<sequence>MKQTTISKKVEGVGIGLHKGEPIKLILEPLEANMGIVFYRSDLGSSFKAEPKNVINTQMATVVGNEKGSVSTIEHLLSAINSYGIDNIRIVLDANEVPVMDGSAISFCMMLDEAGVIELEADKKVIVVKKEVEVRDGDKYVKVTPSKNPKFNYTIKFENPIIGKQSYTFEFSKENFLNEIARARTFGFLKDVQKLNSMGLALGGSLDNAVVIDDSRILNPEGLRFENEFVRHKILDAIGDISLLGAPMVGDYEAYAGSHDLNHKLTVALLSDEKNYEMVTLDEQKAKEYAKAFA</sequence>
<organism>
    <name type="scientific">Campylobacter fetus subsp. fetus (strain 82-40)</name>
    <dbReference type="NCBI Taxonomy" id="360106"/>
    <lineage>
        <taxon>Bacteria</taxon>
        <taxon>Pseudomonadati</taxon>
        <taxon>Campylobacterota</taxon>
        <taxon>Epsilonproteobacteria</taxon>
        <taxon>Campylobacterales</taxon>
        <taxon>Campylobacteraceae</taxon>
        <taxon>Campylobacter</taxon>
    </lineage>
</organism>
<keyword id="KW-0378">Hydrolase</keyword>
<keyword id="KW-0441">Lipid A biosynthesis</keyword>
<keyword id="KW-0444">Lipid biosynthesis</keyword>
<keyword id="KW-0443">Lipid metabolism</keyword>
<keyword id="KW-0479">Metal-binding</keyword>
<keyword id="KW-0862">Zinc</keyword>
<protein>
    <recommendedName>
        <fullName evidence="1">UDP-3-O-acyl-N-acetylglucosamine deacetylase</fullName>
        <shortName evidence="1">UDP-3-O-acyl-GlcNAc deacetylase</shortName>
        <ecNumber evidence="1">3.5.1.108</ecNumber>
    </recommendedName>
    <alternativeName>
        <fullName evidence="1">UDP-3-O-[R-3-hydroxymyristoyl]-N-acetylglucosamine deacetylase</fullName>
    </alternativeName>
</protein>
<dbReference type="EC" id="3.5.1.108" evidence="1"/>
<dbReference type="EMBL" id="CP000487">
    <property type="protein sequence ID" value="ABK82695.1"/>
    <property type="molecule type" value="Genomic_DNA"/>
</dbReference>
<dbReference type="RefSeq" id="WP_002850494.1">
    <property type="nucleotide sequence ID" value="NC_008599.1"/>
</dbReference>
<dbReference type="SMR" id="A0RQZ8"/>
<dbReference type="GeneID" id="61065314"/>
<dbReference type="KEGG" id="cff:CFF8240_1497"/>
<dbReference type="eggNOG" id="COG0774">
    <property type="taxonomic scope" value="Bacteria"/>
</dbReference>
<dbReference type="HOGENOM" id="CLU_046528_1_0_7"/>
<dbReference type="UniPathway" id="UPA00359">
    <property type="reaction ID" value="UER00478"/>
</dbReference>
<dbReference type="Proteomes" id="UP000000760">
    <property type="component" value="Chromosome"/>
</dbReference>
<dbReference type="GO" id="GO:0016020">
    <property type="term" value="C:membrane"/>
    <property type="evidence" value="ECO:0007669"/>
    <property type="project" value="GOC"/>
</dbReference>
<dbReference type="GO" id="GO:0046872">
    <property type="term" value="F:metal ion binding"/>
    <property type="evidence" value="ECO:0007669"/>
    <property type="project" value="UniProtKB-KW"/>
</dbReference>
<dbReference type="GO" id="GO:0103117">
    <property type="term" value="F:UDP-3-O-acyl-N-acetylglucosamine deacetylase activity"/>
    <property type="evidence" value="ECO:0007669"/>
    <property type="project" value="UniProtKB-UniRule"/>
</dbReference>
<dbReference type="GO" id="GO:0009245">
    <property type="term" value="P:lipid A biosynthetic process"/>
    <property type="evidence" value="ECO:0007669"/>
    <property type="project" value="UniProtKB-UniRule"/>
</dbReference>
<dbReference type="Gene3D" id="3.30.230.20">
    <property type="entry name" value="lpxc deacetylase, domain 1"/>
    <property type="match status" value="1"/>
</dbReference>
<dbReference type="Gene3D" id="3.30.1700.10">
    <property type="entry name" value="lpxc deacetylase, domain 2"/>
    <property type="match status" value="1"/>
</dbReference>
<dbReference type="HAMAP" id="MF_00388">
    <property type="entry name" value="LpxC"/>
    <property type="match status" value="1"/>
</dbReference>
<dbReference type="InterPro" id="IPR020568">
    <property type="entry name" value="Ribosomal_Su5_D2-typ_SF"/>
</dbReference>
<dbReference type="InterPro" id="IPR004463">
    <property type="entry name" value="UDP-acyl_GlcNac_deAcase"/>
</dbReference>
<dbReference type="InterPro" id="IPR011334">
    <property type="entry name" value="UDP-acyl_GlcNac_deAcase_C"/>
</dbReference>
<dbReference type="InterPro" id="IPR015870">
    <property type="entry name" value="UDP-acyl_N-AcGlcN_deAcase_N"/>
</dbReference>
<dbReference type="NCBIfam" id="TIGR00325">
    <property type="entry name" value="lpxC"/>
    <property type="match status" value="1"/>
</dbReference>
<dbReference type="PANTHER" id="PTHR33694">
    <property type="entry name" value="UDP-3-O-ACYL-N-ACETYLGLUCOSAMINE DEACETYLASE 1, MITOCHONDRIAL-RELATED"/>
    <property type="match status" value="1"/>
</dbReference>
<dbReference type="PANTHER" id="PTHR33694:SF1">
    <property type="entry name" value="UDP-3-O-ACYL-N-ACETYLGLUCOSAMINE DEACETYLASE 1, MITOCHONDRIAL-RELATED"/>
    <property type="match status" value="1"/>
</dbReference>
<dbReference type="Pfam" id="PF03331">
    <property type="entry name" value="LpxC"/>
    <property type="match status" value="1"/>
</dbReference>
<dbReference type="SUPFAM" id="SSF54211">
    <property type="entry name" value="Ribosomal protein S5 domain 2-like"/>
    <property type="match status" value="2"/>
</dbReference>
<comment type="function">
    <text evidence="1">Catalyzes the hydrolysis of UDP-3-O-myristoyl-N-acetylglucosamine to form UDP-3-O-myristoylglucosamine and acetate, the committed step in lipid A biosynthesis.</text>
</comment>
<comment type="catalytic activity">
    <reaction evidence="1">
        <text>a UDP-3-O-[(3R)-3-hydroxyacyl]-N-acetyl-alpha-D-glucosamine + H2O = a UDP-3-O-[(3R)-3-hydroxyacyl]-alpha-D-glucosamine + acetate</text>
        <dbReference type="Rhea" id="RHEA:67816"/>
        <dbReference type="ChEBI" id="CHEBI:15377"/>
        <dbReference type="ChEBI" id="CHEBI:30089"/>
        <dbReference type="ChEBI" id="CHEBI:137740"/>
        <dbReference type="ChEBI" id="CHEBI:173225"/>
        <dbReference type="EC" id="3.5.1.108"/>
    </reaction>
</comment>
<comment type="cofactor">
    <cofactor evidence="1">
        <name>Zn(2+)</name>
        <dbReference type="ChEBI" id="CHEBI:29105"/>
    </cofactor>
</comment>
<comment type="pathway">
    <text evidence="1">Glycolipid biosynthesis; lipid IV(A) biosynthesis; lipid IV(A) from (3R)-3-hydroxytetradecanoyl-[acyl-carrier-protein] and UDP-N-acetyl-alpha-D-glucosamine: step 2/6.</text>
</comment>
<comment type="similarity">
    <text evidence="1">Belongs to the LpxC family.</text>
</comment>
<evidence type="ECO:0000255" key="1">
    <source>
        <dbReference type="HAMAP-Rule" id="MF_00388"/>
    </source>
</evidence>
<accession>A0RQZ8</accession>
<reference key="1">
    <citation type="submission" date="2006-11" db="EMBL/GenBank/DDBJ databases">
        <title>Sequence of Campylobacter fetus subsp. fetus 82-40.</title>
        <authorList>
            <person name="Fouts D.E."/>
            <person name="Nelson K.E."/>
        </authorList>
    </citation>
    <scope>NUCLEOTIDE SEQUENCE [LARGE SCALE GENOMIC DNA]</scope>
    <source>
        <strain>82-40</strain>
    </source>
</reference>
<proteinExistence type="inferred from homology"/>